<keyword id="KW-0997">Cell inner membrane</keyword>
<keyword id="KW-1003">Cell membrane</keyword>
<keyword id="KW-0407">Ion channel</keyword>
<keyword id="KW-0406">Ion transport</keyword>
<keyword id="KW-0472">Membrane</keyword>
<keyword id="KW-0479">Metal-binding</keyword>
<keyword id="KW-1185">Reference proteome</keyword>
<keyword id="KW-0915">Sodium</keyword>
<keyword id="KW-0812">Transmembrane</keyword>
<keyword id="KW-1133">Transmembrane helix</keyword>
<keyword id="KW-0813">Transport</keyword>
<organism>
    <name type="scientific">Maridesulfovibrio salexigens (strain ATCC 14822 / DSM 2638 / NCIMB 8403 / VKM B-1763)</name>
    <name type="common">Desulfovibrio salexigens</name>
    <dbReference type="NCBI Taxonomy" id="526222"/>
    <lineage>
        <taxon>Bacteria</taxon>
        <taxon>Pseudomonadati</taxon>
        <taxon>Thermodesulfobacteriota</taxon>
        <taxon>Desulfovibrionia</taxon>
        <taxon>Desulfovibrionales</taxon>
        <taxon>Desulfovibrionaceae</taxon>
        <taxon>Maridesulfovibrio</taxon>
    </lineage>
</organism>
<proteinExistence type="inferred from homology"/>
<gene>
    <name evidence="1" type="primary">fluC</name>
    <name evidence="1" type="synonym">crcB</name>
    <name type="ordered locus">Desal_1827</name>
</gene>
<name>FLUC_MARSD</name>
<sequence length="126" mass="13482">MHKYLYIAAGGAAGSLCRYLVSGVTQRMFATSFPIGTFSVNMIGCLFFGLVTGLFEERLGLPPEMRLLILTGFMGAFTTFSTYMFESTNLIKSGQWAMTALNIGGQSILGFACIVGGLALGRLIVS</sequence>
<reference key="1">
    <citation type="submission" date="2009-06" db="EMBL/GenBank/DDBJ databases">
        <title>Complete sequence of Desulfovibrio salexigens DSM 2638.</title>
        <authorList>
            <consortium name="US DOE Joint Genome Institute"/>
            <person name="Lucas S."/>
            <person name="Copeland A."/>
            <person name="Lapidus A."/>
            <person name="Glavina del Rio T."/>
            <person name="Tice H."/>
            <person name="Bruce D."/>
            <person name="Goodwin L."/>
            <person name="Pitluck S."/>
            <person name="Munk A.C."/>
            <person name="Brettin T."/>
            <person name="Detter J.C."/>
            <person name="Han C."/>
            <person name="Tapia R."/>
            <person name="Larimer F."/>
            <person name="Land M."/>
            <person name="Hauser L."/>
            <person name="Kyrpides N."/>
            <person name="Anderson I."/>
            <person name="Wall J.D."/>
            <person name="Arkin A.P."/>
            <person name="Dehal P."/>
            <person name="Chivian D."/>
            <person name="Giles B."/>
            <person name="Hazen T.C."/>
        </authorList>
    </citation>
    <scope>NUCLEOTIDE SEQUENCE [LARGE SCALE GENOMIC DNA]</scope>
    <source>
        <strain>ATCC 14822 / DSM 2638 / NCIMB 8403 / VKM B-1763</strain>
    </source>
</reference>
<comment type="function">
    <text evidence="1">Fluoride-specific ion channel. Important for reducing fluoride concentration in the cell, thus reducing its toxicity.</text>
</comment>
<comment type="catalytic activity">
    <reaction evidence="1">
        <text>fluoride(in) = fluoride(out)</text>
        <dbReference type="Rhea" id="RHEA:76159"/>
        <dbReference type="ChEBI" id="CHEBI:17051"/>
    </reaction>
    <physiologicalReaction direction="left-to-right" evidence="1">
        <dbReference type="Rhea" id="RHEA:76160"/>
    </physiologicalReaction>
</comment>
<comment type="activity regulation">
    <text evidence="1">Na(+) is not transported, but it plays an essential structural role and its presence is essential for fluoride channel function.</text>
</comment>
<comment type="subcellular location">
    <subcellularLocation>
        <location evidence="1">Cell inner membrane</location>
        <topology evidence="1">Multi-pass membrane protein</topology>
    </subcellularLocation>
</comment>
<comment type="similarity">
    <text evidence="1">Belongs to the fluoride channel Fluc/FEX (TC 1.A.43) family.</text>
</comment>
<evidence type="ECO:0000255" key="1">
    <source>
        <dbReference type="HAMAP-Rule" id="MF_00454"/>
    </source>
</evidence>
<accession>C6BTV9</accession>
<dbReference type="EMBL" id="CP001649">
    <property type="protein sequence ID" value="ACS79889.1"/>
    <property type="molecule type" value="Genomic_DNA"/>
</dbReference>
<dbReference type="RefSeq" id="WP_015851705.1">
    <property type="nucleotide sequence ID" value="NC_012881.1"/>
</dbReference>
<dbReference type="SMR" id="C6BTV9"/>
<dbReference type="STRING" id="526222.Desal_1827"/>
<dbReference type="KEGG" id="dsa:Desal_1827"/>
<dbReference type="eggNOG" id="COG0239">
    <property type="taxonomic scope" value="Bacteria"/>
</dbReference>
<dbReference type="HOGENOM" id="CLU_114342_2_3_7"/>
<dbReference type="OrthoDB" id="9806299at2"/>
<dbReference type="Proteomes" id="UP000002601">
    <property type="component" value="Chromosome"/>
</dbReference>
<dbReference type="GO" id="GO:0005886">
    <property type="term" value="C:plasma membrane"/>
    <property type="evidence" value="ECO:0007669"/>
    <property type="project" value="UniProtKB-SubCell"/>
</dbReference>
<dbReference type="GO" id="GO:0062054">
    <property type="term" value="F:fluoride channel activity"/>
    <property type="evidence" value="ECO:0007669"/>
    <property type="project" value="UniProtKB-UniRule"/>
</dbReference>
<dbReference type="GO" id="GO:0046872">
    <property type="term" value="F:metal ion binding"/>
    <property type="evidence" value="ECO:0007669"/>
    <property type="project" value="UniProtKB-KW"/>
</dbReference>
<dbReference type="GO" id="GO:0140114">
    <property type="term" value="P:cellular detoxification of fluoride"/>
    <property type="evidence" value="ECO:0007669"/>
    <property type="project" value="UniProtKB-UniRule"/>
</dbReference>
<dbReference type="HAMAP" id="MF_00454">
    <property type="entry name" value="FluC"/>
    <property type="match status" value="1"/>
</dbReference>
<dbReference type="InterPro" id="IPR003691">
    <property type="entry name" value="FluC"/>
</dbReference>
<dbReference type="NCBIfam" id="TIGR00494">
    <property type="entry name" value="crcB"/>
    <property type="match status" value="1"/>
</dbReference>
<dbReference type="PANTHER" id="PTHR28259">
    <property type="entry name" value="FLUORIDE EXPORT PROTEIN 1-RELATED"/>
    <property type="match status" value="1"/>
</dbReference>
<dbReference type="PANTHER" id="PTHR28259:SF18">
    <property type="entry name" value="FLUORIDE-SPECIFIC ION CHANNEL FLUC"/>
    <property type="match status" value="1"/>
</dbReference>
<dbReference type="Pfam" id="PF02537">
    <property type="entry name" value="CRCB"/>
    <property type="match status" value="1"/>
</dbReference>
<feature type="chain" id="PRO_1000206245" description="Fluoride-specific ion channel FluC">
    <location>
        <begin position="1"/>
        <end position="126"/>
    </location>
</feature>
<feature type="transmembrane region" description="Helical" evidence="1">
    <location>
        <begin position="4"/>
        <end position="24"/>
    </location>
</feature>
<feature type="transmembrane region" description="Helical" evidence="1">
    <location>
        <begin position="35"/>
        <end position="55"/>
    </location>
</feature>
<feature type="transmembrane region" description="Helical" evidence="1">
    <location>
        <begin position="67"/>
        <end position="87"/>
    </location>
</feature>
<feature type="transmembrane region" description="Helical" evidence="1">
    <location>
        <begin position="100"/>
        <end position="120"/>
    </location>
</feature>
<feature type="binding site" evidence="1">
    <location>
        <position position="75"/>
    </location>
    <ligand>
        <name>Na(+)</name>
        <dbReference type="ChEBI" id="CHEBI:29101"/>
        <note>structural</note>
    </ligand>
</feature>
<feature type="binding site" evidence="1">
    <location>
        <position position="78"/>
    </location>
    <ligand>
        <name>Na(+)</name>
        <dbReference type="ChEBI" id="CHEBI:29101"/>
        <note>structural</note>
    </ligand>
</feature>
<protein>
    <recommendedName>
        <fullName evidence="1">Fluoride-specific ion channel FluC</fullName>
    </recommendedName>
</protein>